<name>EFTU2_WOLPM</name>
<dbReference type="EC" id="3.6.5.3" evidence="2"/>
<dbReference type="EMBL" id="AE017196">
    <property type="protein sequence ID" value="AAS14381.1"/>
    <property type="molecule type" value="Genomic_DNA"/>
</dbReference>
<dbReference type="SMR" id="Q73H85"/>
<dbReference type="EnsemblBacteria" id="AAS14381">
    <property type="protein sequence ID" value="AAS14381"/>
    <property type="gene ID" value="WD_0683"/>
</dbReference>
<dbReference type="KEGG" id="wol:WD_0683"/>
<dbReference type="eggNOG" id="COG0050">
    <property type="taxonomic scope" value="Bacteria"/>
</dbReference>
<dbReference type="Proteomes" id="UP000008215">
    <property type="component" value="Chromosome"/>
</dbReference>
<dbReference type="GO" id="GO:0005737">
    <property type="term" value="C:cytoplasm"/>
    <property type="evidence" value="ECO:0007669"/>
    <property type="project" value="UniProtKB-SubCell"/>
</dbReference>
<dbReference type="GO" id="GO:0005525">
    <property type="term" value="F:GTP binding"/>
    <property type="evidence" value="ECO:0007669"/>
    <property type="project" value="UniProtKB-UniRule"/>
</dbReference>
<dbReference type="GO" id="GO:0003924">
    <property type="term" value="F:GTPase activity"/>
    <property type="evidence" value="ECO:0007669"/>
    <property type="project" value="InterPro"/>
</dbReference>
<dbReference type="GO" id="GO:0097216">
    <property type="term" value="F:guanosine tetraphosphate binding"/>
    <property type="evidence" value="ECO:0007669"/>
    <property type="project" value="UniProtKB-ARBA"/>
</dbReference>
<dbReference type="GO" id="GO:0003746">
    <property type="term" value="F:translation elongation factor activity"/>
    <property type="evidence" value="ECO:0007669"/>
    <property type="project" value="UniProtKB-UniRule"/>
</dbReference>
<dbReference type="CDD" id="cd01884">
    <property type="entry name" value="EF_Tu"/>
    <property type="match status" value="1"/>
</dbReference>
<dbReference type="CDD" id="cd03697">
    <property type="entry name" value="EFTU_II"/>
    <property type="match status" value="1"/>
</dbReference>
<dbReference type="CDD" id="cd03707">
    <property type="entry name" value="EFTU_III"/>
    <property type="match status" value="1"/>
</dbReference>
<dbReference type="FunFam" id="2.40.30.10:FF:000001">
    <property type="entry name" value="Elongation factor Tu"/>
    <property type="match status" value="1"/>
</dbReference>
<dbReference type="FunFam" id="3.40.50.300:FF:000003">
    <property type="entry name" value="Elongation factor Tu"/>
    <property type="match status" value="1"/>
</dbReference>
<dbReference type="Gene3D" id="3.40.50.300">
    <property type="entry name" value="P-loop containing nucleotide triphosphate hydrolases"/>
    <property type="match status" value="1"/>
</dbReference>
<dbReference type="Gene3D" id="2.40.30.10">
    <property type="entry name" value="Translation factors"/>
    <property type="match status" value="2"/>
</dbReference>
<dbReference type="HAMAP" id="MF_00118_B">
    <property type="entry name" value="EF_Tu_B"/>
    <property type="match status" value="1"/>
</dbReference>
<dbReference type="InterPro" id="IPR041709">
    <property type="entry name" value="EF-Tu_GTP-bd"/>
</dbReference>
<dbReference type="InterPro" id="IPR050055">
    <property type="entry name" value="EF-Tu_GTPase"/>
</dbReference>
<dbReference type="InterPro" id="IPR004161">
    <property type="entry name" value="EFTu-like_2"/>
</dbReference>
<dbReference type="InterPro" id="IPR033720">
    <property type="entry name" value="EFTU_2"/>
</dbReference>
<dbReference type="InterPro" id="IPR031157">
    <property type="entry name" value="G_TR_CS"/>
</dbReference>
<dbReference type="InterPro" id="IPR027417">
    <property type="entry name" value="P-loop_NTPase"/>
</dbReference>
<dbReference type="InterPro" id="IPR005225">
    <property type="entry name" value="Small_GTP-bd"/>
</dbReference>
<dbReference type="InterPro" id="IPR000795">
    <property type="entry name" value="T_Tr_GTP-bd_dom"/>
</dbReference>
<dbReference type="InterPro" id="IPR009000">
    <property type="entry name" value="Transl_B-barrel_sf"/>
</dbReference>
<dbReference type="InterPro" id="IPR009001">
    <property type="entry name" value="Transl_elong_EF1A/Init_IF2_C"/>
</dbReference>
<dbReference type="InterPro" id="IPR004541">
    <property type="entry name" value="Transl_elong_EFTu/EF1A_bac/org"/>
</dbReference>
<dbReference type="InterPro" id="IPR004160">
    <property type="entry name" value="Transl_elong_EFTu/EF1A_C"/>
</dbReference>
<dbReference type="NCBIfam" id="TIGR00485">
    <property type="entry name" value="EF-Tu"/>
    <property type="match status" value="1"/>
</dbReference>
<dbReference type="NCBIfam" id="NF000766">
    <property type="entry name" value="PRK00049.1"/>
    <property type="match status" value="1"/>
</dbReference>
<dbReference type="NCBIfam" id="NF009372">
    <property type="entry name" value="PRK12735.1"/>
    <property type="match status" value="1"/>
</dbReference>
<dbReference type="NCBIfam" id="NF009373">
    <property type="entry name" value="PRK12736.1"/>
    <property type="match status" value="1"/>
</dbReference>
<dbReference type="NCBIfam" id="TIGR00231">
    <property type="entry name" value="small_GTP"/>
    <property type="match status" value="1"/>
</dbReference>
<dbReference type="PANTHER" id="PTHR43721:SF22">
    <property type="entry name" value="ELONGATION FACTOR TU, MITOCHONDRIAL"/>
    <property type="match status" value="1"/>
</dbReference>
<dbReference type="PANTHER" id="PTHR43721">
    <property type="entry name" value="ELONGATION FACTOR TU-RELATED"/>
    <property type="match status" value="1"/>
</dbReference>
<dbReference type="Pfam" id="PF00009">
    <property type="entry name" value="GTP_EFTU"/>
    <property type="match status" value="1"/>
</dbReference>
<dbReference type="Pfam" id="PF03144">
    <property type="entry name" value="GTP_EFTU_D2"/>
    <property type="match status" value="1"/>
</dbReference>
<dbReference type="Pfam" id="PF03143">
    <property type="entry name" value="GTP_EFTU_D3"/>
    <property type="match status" value="1"/>
</dbReference>
<dbReference type="PRINTS" id="PR00315">
    <property type="entry name" value="ELONGATNFCT"/>
</dbReference>
<dbReference type="SUPFAM" id="SSF50465">
    <property type="entry name" value="EF-Tu/eEF-1alpha/eIF2-gamma C-terminal domain"/>
    <property type="match status" value="1"/>
</dbReference>
<dbReference type="SUPFAM" id="SSF52540">
    <property type="entry name" value="P-loop containing nucleoside triphosphate hydrolases"/>
    <property type="match status" value="1"/>
</dbReference>
<dbReference type="SUPFAM" id="SSF50447">
    <property type="entry name" value="Translation proteins"/>
    <property type="match status" value="1"/>
</dbReference>
<dbReference type="PROSITE" id="PS00301">
    <property type="entry name" value="G_TR_1"/>
    <property type="match status" value="1"/>
</dbReference>
<dbReference type="PROSITE" id="PS51722">
    <property type="entry name" value="G_TR_2"/>
    <property type="match status" value="1"/>
</dbReference>
<protein>
    <recommendedName>
        <fullName evidence="2">Elongation factor Tu 2</fullName>
        <shortName evidence="2">EF-Tu 2</shortName>
        <ecNumber evidence="2">3.6.5.3</ecNumber>
    </recommendedName>
</protein>
<accession>Q73H85</accession>
<organism>
    <name type="scientific">Wolbachia pipientis wMel</name>
    <dbReference type="NCBI Taxonomy" id="163164"/>
    <lineage>
        <taxon>Bacteria</taxon>
        <taxon>Pseudomonadati</taxon>
        <taxon>Pseudomonadota</taxon>
        <taxon>Alphaproteobacteria</taxon>
        <taxon>Rickettsiales</taxon>
        <taxon>Anaplasmataceae</taxon>
        <taxon>Wolbachieae</taxon>
        <taxon>Wolbachia</taxon>
    </lineage>
</organism>
<gene>
    <name evidence="2" type="primary">tuf2</name>
    <name type="ordered locus">WD_0683</name>
</gene>
<sequence length="390" mass="42654">MTAIVEAFGKPHVNVGTIGHVDHGKTTLTAAITKHYGNFVAYDQIDKAPEERKRGITIATAHVEYQTEKRHYAHVDCPGHADYVKNMIVGAAQMDAAILVVSGVDGPMPQTREHILLAKQVGVGYIVVYINKADVADADMIDLVEMEVRELLSKYGFPGDEVPVVVGSALKALEDDSSEYGKKSIDKLMEKLDEYVAVPPRPVDLPFLLPIEDVFSISGRGTVVTGRIEKGEIKTGEEIEIIGLKATQKTICTGVEMFKKLLDKGSAGLNVGILLRGTKREEVERGQVLAKPGTITPHRKFKAEVYILKKEEGGRHTPFFANYQPQFYLRTTDVTGSIKLLDGKEMVMPGDNVSVEVELQVPIAMDKGLRFAIREGGRTVGSGVVSEILE</sequence>
<proteinExistence type="inferred from homology"/>
<comment type="function">
    <text evidence="2">GTP hydrolase that promotes the GTP-dependent binding of aminoacyl-tRNA to the A-site of ribosomes during protein biosynthesis.</text>
</comment>
<comment type="catalytic activity">
    <reaction evidence="2">
        <text>GTP + H2O = GDP + phosphate + H(+)</text>
        <dbReference type="Rhea" id="RHEA:19669"/>
        <dbReference type="ChEBI" id="CHEBI:15377"/>
        <dbReference type="ChEBI" id="CHEBI:15378"/>
        <dbReference type="ChEBI" id="CHEBI:37565"/>
        <dbReference type="ChEBI" id="CHEBI:43474"/>
        <dbReference type="ChEBI" id="CHEBI:58189"/>
        <dbReference type="EC" id="3.6.5.3"/>
    </reaction>
    <physiologicalReaction direction="left-to-right" evidence="2">
        <dbReference type="Rhea" id="RHEA:19670"/>
    </physiologicalReaction>
</comment>
<comment type="subunit">
    <text evidence="2">Monomer.</text>
</comment>
<comment type="subcellular location">
    <subcellularLocation>
        <location evidence="2">Cytoplasm</location>
    </subcellularLocation>
</comment>
<comment type="similarity">
    <text evidence="2">Belongs to the TRAFAC class translation factor GTPase superfamily. Classic translation factor GTPase family. EF-Tu/EF-1A subfamily.</text>
</comment>
<keyword id="KW-0963">Cytoplasm</keyword>
<keyword id="KW-0251">Elongation factor</keyword>
<keyword id="KW-0342">GTP-binding</keyword>
<keyword id="KW-0378">Hydrolase</keyword>
<keyword id="KW-0460">Magnesium</keyword>
<keyword id="KW-0479">Metal-binding</keyword>
<keyword id="KW-0547">Nucleotide-binding</keyword>
<keyword id="KW-0648">Protein biosynthesis</keyword>
<evidence type="ECO:0000250" key="1"/>
<evidence type="ECO:0000255" key="2">
    <source>
        <dbReference type="HAMAP-Rule" id="MF_00118"/>
    </source>
</evidence>
<reference key="1">
    <citation type="journal article" date="2004" name="PLoS Biol.">
        <title>Phylogenomics of the reproductive parasite Wolbachia pipientis wMel: a streamlined genome overrun by mobile genetic elements.</title>
        <authorList>
            <person name="Wu M."/>
            <person name="Sun L.V."/>
            <person name="Vamathevan J.J."/>
            <person name="Riegler M."/>
            <person name="DeBoy R.T."/>
            <person name="Brownlie J.C."/>
            <person name="McGraw E.A."/>
            <person name="Martin W."/>
            <person name="Esser C."/>
            <person name="Ahmadinejad N."/>
            <person name="Wiegand C."/>
            <person name="Madupu R."/>
            <person name="Beanan M.J."/>
            <person name="Brinkac L.M."/>
            <person name="Daugherty S.C."/>
            <person name="Durkin A.S."/>
            <person name="Kolonay J.F."/>
            <person name="Nelson W.C."/>
            <person name="Mohamoud Y."/>
            <person name="Lee P."/>
            <person name="Berry K.J."/>
            <person name="Young M.B."/>
            <person name="Utterback T.R."/>
            <person name="Weidman J.F."/>
            <person name="Nierman W.C."/>
            <person name="Paulsen I.T."/>
            <person name="Nelson K.E."/>
            <person name="Tettelin H."/>
            <person name="O'Neill S.L."/>
            <person name="Eisen J.A."/>
        </authorList>
    </citation>
    <scope>NUCLEOTIDE SEQUENCE [LARGE SCALE GENOMIC DNA]</scope>
</reference>
<feature type="chain" id="PRO_0000337572" description="Elongation factor Tu 2">
    <location>
        <begin position="1"/>
        <end position="390"/>
    </location>
</feature>
<feature type="domain" description="tr-type G">
    <location>
        <begin position="10"/>
        <end position="201"/>
    </location>
</feature>
<feature type="region of interest" description="G1" evidence="1">
    <location>
        <begin position="19"/>
        <end position="26"/>
    </location>
</feature>
<feature type="region of interest" description="G2" evidence="1">
    <location>
        <begin position="55"/>
        <end position="59"/>
    </location>
</feature>
<feature type="region of interest" description="G3" evidence="1">
    <location>
        <begin position="76"/>
        <end position="79"/>
    </location>
</feature>
<feature type="region of interest" description="G4" evidence="1">
    <location>
        <begin position="131"/>
        <end position="134"/>
    </location>
</feature>
<feature type="region of interest" description="G5" evidence="1">
    <location>
        <begin position="168"/>
        <end position="170"/>
    </location>
</feature>
<feature type="binding site" evidence="2">
    <location>
        <begin position="19"/>
        <end position="26"/>
    </location>
    <ligand>
        <name>GTP</name>
        <dbReference type="ChEBI" id="CHEBI:37565"/>
    </ligand>
</feature>
<feature type="binding site" evidence="2">
    <location>
        <position position="26"/>
    </location>
    <ligand>
        <name>Mg(2+)</name>
        <dbReference type="ChEBI" id="CHEBI:18420"/>
    </ligand>
</feature>
<feature type="binding site" evidence="2">
    <location>
        <begin position="76"/>
        <end position="80"/>
    </location>
    <ligand>
        <name>GTP</name>
        <dbReference type="ChEBI" id="CHEBI:37565"/>
    </ligand>
</feature>
<feature type="binding site" evidence="2">
    <location>
        <begin position="131"/>
        <end position="134"/>
    </location>
    <ligand>
        <name>GTP</name>
        <dbReference type="ChEBI" id="CHEBI:37565"/>
    </ligand>
</feature>